<feature type="chain" id="PRO_0000197030" description="Cytochrome c oxidase subunit 5B heart, mitochondrial">
    <location>
        <begin position="1"/>
        <end position="20" status="greater than"/>
    </location>
</feature>
<feature type="region of interest" description="Disordered" evidence="3">
    <location>
        <begin position="1"/>
        <end position="20"/>
    </location>
</feature>
<feature type="non-terminal residue">
    <location>
        <position position="20"/>
    </location>
</feature>
<keyword id="KW-0903">Direct protein sequencing</keyword>
<keyword id="KW-0472">Membrane</keyword>
<keyword id="KW-0496">Mitochondrion</keyword>
<keyword id="KW-0999">Mitochondrion inner membrane</keyword>
<evidence type="ECO:0000250" key="1">
    <source>
        <dbReference type="UniProtKB" id="P00428"/>
    </source>
</evidence>
<evidence type="ECO:0000250" key="2">
    <source>
        <dbReference type="UniProtKB" id="P04037"/>
    </source>
</evidence>
<evidence type="ECO:0000256" key="3">
    <source>
        <dbReference type="SAM" id="MobiDB-lite"/>
    </source>
</evidence>
<evidence type="ECO:0000305" key="4"/>
<sequence length="20" mass="2187">XXLKGIPTDEEQATGLEEYA</sequence>
<name>CX5B1_ONCMY</name>
<comment type="function">
    <text evidence="2">Component of the cytochrome c oxidase, the last enzyme in the mitochondrial electron transport chain which drives oxidative phosphorylation. The respiratory chain contains 3 multisubunit complexes succinate dehydrogenase (complex II, CII), ubiquinol-cytochrome c oxidoreductase (cytochrome b-c1 complex, complex III, CIII) and cytochrome c oxidase (complex IV, CIV), that cooperate to transfer electrons derived from NADH and succinate to molecular oxygen, creating an electrochemical gradient over the inner membrane that drives transmembrane transport and the ATP synthase. Cytochrome c oxidase is the component of the respiratory chain that catalyzes the reduction of oxygen to water. Electrons originating from reduced cytochrome c in the intermembrane space (IMS) are transferred via the dinuclear copper A center (CU(A)) of subunit 2 and heme A of subunit 1 to the active site in subunit 1, a binuclear center (BNC) formed by heme A3 and copper B (CU(B)). The BNC reduces molecular oxygen to 2 water molecules using 4 electrons from cytochrome c in the IMS and 4 protons from the mitochondrial matrix.</text>
</comment>
<comment type="pathway">
    <text evidence="2">Energy metabolism; oxidative phosphorylation.</text>
</comment>
<comment type="subunit">
    <text evidence="1">Component of the cytochrome c oxidase (complex IV, CIV), a multisubunit enzyme composed of 14 subunits. The complex is composed of a catalytic core of 3 subunits MT-CO1, MT-CO2 and MT-CO3, encoded in the mitochondrial DNA, and 11 supernumerary subunits COX4I, COX5A, COX5B, COX6A, COX6B, COX6C, COX7A, COX7B, COX7C, COX8 and NDUFA4, which are encoded in the nuclear genome. The complex exists as a monomer or a dimer and forms supercomplexes (SCs) in the inner mitochondrial membrane with NADH-ubiquinone oxidoreductase (complex I, CI) and ubiquinol-cytochrome c oxidoreductase (cytochrome b-c1 complex, complex III, CIII), resulting in different assemblies (supercomplex SCI(1)III(2)IV(1) and megacomplex MCI(2)III(2)IV(2)).</text>
</comment>
<comment type="subcellular location">
    <subcellularLocation>
        <location evidence="1">Mitochondrion inner membrane</location>
        <topology evidence="1">Peripheral membrane protein</topology>
        <orientation evidence="1">Matrix side</orientation>
    </subcellularLocation>
</comment>
<comment type="similarity">
    <text evidence="4">Belongs to the cytochrome c oxidase subunit 5B family.</text>
</comment>
<protein>
    <recommendedName>
        <fullName>Cytochrome c oxidase subunit 5B heart, mitochondrial</fullName>
    </recommendedName>
    <alternativeName>
        <fullName>Cytochrome c oxidase polypeptide Vb heart</fullName>
    </alternativeName>
</protein>
<organism>
    <name type="scientific">Oncorhynchus mykiss</name>
    <name type="common">Rainbow trout</name>
    <name type="synonym">Salmo gairdneri</name>
    <dbReference type="NCBI Taxonomy" id="8022"/>
    <lineage>
        <taxon>Eukaryota</taxon>
        <taxon>Metazoa</taxon>
        <taxon>Chordata</taxon>
        <taxon>Craniata</taxon>
        <taxon>Vertebrata</taxon>
        <taxon>Euteleostomi</taxon>
        <taxon>Actinopterygii</taxon>
        <taxon>Neopterygii</taxon>
        <taxon>Teleostei</taxon>
        <taxon>Protacanthopterygii</taxon>
        <taxon>Salmoniformes</taxon>
        <taxon>Salmonidae</taxon>
        <taxon>Salmoninae</taxon>
        <taxon>Oncorhynchus</taxon>
    </lineage>
</organism>
<proteinExistence type="evidence at protein level"/>
<reference key="1">
    <citation type="journal article" date="1994" name="Eur. J. Biochem.">
        <title>Identification of tissue-specific isoforms for subunits Vb and VIIa of cytochrome c oxidase isolated from rainbow trout.</title>
        <authorList>
            <person name="Freund R."/>
            <person name="Kadenbach B."/>
        </authorList>
    </citation>
    <scope>PROTEIN SEQUENCE</scope>
    <source>
        <tissue>Heart</tissue>
    </source>
</reference>
<accession>P80329</accession>
<dbReference type="UniPathway" id="UPA00705"/>
<dbReference type="Proteomes" id="UP000694395">
    <property type="component" value="Unplaced"/>
</dbReference>
<dbReference type="GO" id="GO:0005743">
    <property type="term" value="C:mitochondrial inner membrane"/>
    <property type="evidence" value="ECO:0007669"/>
    <property type="project" value="UniProtKB-SubCell"/>
</dbReference>
<dbReference type="GO" id="GO:0006119">
    <property type="term" value="P:oxidative phosphorylation"/>
    <property type="evidence" value="ECO:0007669"/>
    <property type="project" value="UniProtKB-UniPathway"/>
</dbReference>